<name>PIMT_ANAD2</name>
<accession>B8J9E3</accession>
<proteinExistence type="inferred from homology"/>
<organism>
    <name type="scientific">Anaeromyxobacter dehalogenans (strain 2CP-1 / ATCC BAA-258)</name>
    <dbReference type="NCBI Taxonomy" id="455488"/>
    <lineage>
        <taxon>Bacteria</taxon>
        <taxon>Pseudomonadati</taxon>
        <taxon>Myxococcota</taxon>
        <taxon>Myxococcia</taxon>
        <taxon>Myxococcales</taxon>
        <taxon>Cystobacterineae</taxon>
        <taxon>Anaeromyxobacteraceae</taxon>
        <taxon>Anaeromyxobacter</taxon>
    </lineage>
</organism>
<evidence type="ECO:0000255" key="1">
    <source>
        <dbReference type="HAMAP-Rule" id="MF_00090"/>
    </source>
</evidence>
<comment type="function">
    <text evidence="1">Catalyzes the methyl esterification of L-isoaspartyl residues in peptides and proteins that result from spontaneous decomposition of normal L-aspartyl and L-asparaginyl residues. It plays a role in the repair and/or degradation of damaged proteins.</text>
</comment>
<comment type="catalytic activity">
    <reaction evidence="1">
        <text>[protein]-L-isoaspartate + S-adenosyl-L-methionine = [protein]-L-isoaspartate alpha-methyl ester + S-adenosyl-L-homocysteine</text>
        <dbReference type="Rhea" id="RHEA:12705"/>
        <dbReference type="Rhea" id="RHEA-COMP:12143"/>
        <dbReference type="Rhea" id="RHEA-COMP:12144"/>
        <dbReference type="ChEBI" id="CHEBI:57856"/>
        <dbReference type="ChEBI" id="CHEBI:59789"/>
        <dbReference type="ChEBI" id="CHEBI:90596"/>
        <dbReference type="ChEBI" id="CHEBI:90598"/>
        <dbReference type="EC" id="2.1.1.77"/>
    </reaction>
</comment>
<comment type="subcellular location">
    <subcellularLocation>
        <location evidence="1">Cytoplasm</location>
    </subcellularLocation>
</comment>
<comment type="similarity">
    <text evidence="1">Belongs to the methyltransferase superfamily. L-isoaspartyl/D-aspartyl protein methyltransferase family.</text>
</comment>
<dbReference type="EC" id="2.1.1.77" evidence="1"/>
<dbReference type="EMBL" id="CP001359">
    <property type="protein sequence ID" value="ACL65549.1"/>
    <property type="molecule type" value="Genomic_DNA"/>
</dbReference>
<dbReference type="RefSeq" id="WP_012633392.1">
    <property type="nucleotide sequence ID" value="NC_011891.1"/>
</dbReference>
<dbReference type="SMR" id="B8J9E3"/>
<dbReference type="KEGG" id="acp:A2cp1_2211"/>
<dbReference type="HOGENOM" id="CLU_055432_2_0_7"/>
<dbReference type="Proteomes" id="UP000007089">
    <property type="component" value="Chromosome"/>
</dbReference>
<dbReference type="GO" id="GO:0005737">
    <property type="term" value="C:cytoplasm"/>
    <property type="evidence" value="ECO:0007669"/>
    <property type="project" value="UniProtKB-SubCell"/>
</dbReference>
<dbReference type="GO" id="GO:0004719">
    <property type="term" value="F:protein-L-isoaspartate (D-aspartate) O-methyltransferase activity"/>
    <property type="evidence" value="ECO:0007669"/>
    <property type="project" value="UniProtKB-UniRule"/>
</dbReference>
<dbReference type="GO" id="GO:0032259">
    <property type="term" value="P:methylation"/>
    <property type="evidence" value="ECO:0007669"/>
    <property type="project" value="UniProtKB-KW"/>
</dbReference>
<dbReference type="GO" id="GO:0036211">
    <property type="term" value="P:protein modification process"/>
    <property type="evidence" value="ECO:0007669"/>
    <property type="project" value="UniProtKB-UniRule"/>
</dbReference>
<dbReference type="GO" id="GO:0030091">
    <property type="term" value="P:protein repair"/>
    <property type="evidence" value="ECO:0007669"/>
    <property type="project" value="UniProtKB-UniRule"/>
</dbReference>
<dbReference type="CDD" id="cd02440">
    <property type="entry name" value="AdoMet_MTases"/>
    <property type="match status" value="1"/>
</dbReference>
<dbReference type="FunFam" id="3.40.50.150:FF:000010">
    <property type="entry name" value="Protein-L-isoaspartate O-methyltransferase"/>
    <property type="match status" value="1"/>
</dbReference>
<dbReference type="Gene3D" id="3.40.50.150">
    <property type="entry name" value="Vaccinia Virus protein VP39"/>
    <property type="match status" value="1"/>
</dbReference>
<dbReference type="HAMAP" id="MF_00090">
    <property type="entry name" value="PIMT"/>
    <property type="match status" value="1"/>
</dbReference>
<dbReference type="InterPro" id="IPR000682">
    <property type="entry name" value="PCMT"/>
</dbReference>
<dbReference type="InterPro" id="IPR029063">
    <property type="entry name" value="SAM-dependent_MTases_sf"/>
</dbReference>
<dbReference type="NCBIfam" id="TIGR00080">
    <property type="entry name" value="pimt"/>
    <property type="match status" value="1"/>
</dbReference>
<dbReference type="NCBIfam" id="NF001453">
    <property type="entry name" value="PRK00312.1"/>
    <property type="match status" value="1"/>
</dbReference>
<dbReference type="PANTHER" id="PTHR11579">
    <property type="entry name" value="PROTEIN-L-ISOASPARTATE O-METHYLTRANSFERASE"/>
    <property type="match status" value="1"/>
</dbReference>
<dbReference type="PANTHER" id="PTHR11579:SF0">
    <property type="entry name" value="PROTEIN-L-ISOASPARTATE(D-ASPARTATE) O-METHYLTRANSFERASE"/>
    <property type="match status" value="1"/>
</dbReference>
<dbReference type="Pfam" id="PF01135">
    <property type="entry name" value="PCMT"/>
    <property type="match status" value="1"/>
</dbReference>
<dbReference type="SUPFAM" id="SSF53335">
    <property type="entry name" value="S-adenosyl-L-methionine-dependent methyltransferases"/>
    <property type="match status" value="1"/>
</dbReference>
<dbReference type="PROSITE" id="PS01279">
    <property type="entry name" value="PCMT"/>
    <property type="match status" value="1"/>
</dbReference>
<reference key="1">
    <citation type="submission" date="2009-01" db="EMBL/GenBank/DDBJ databases">
        <title>Complete sequence of Anaeromyxobacter dehalogenans 2CP-1.</title>
        <authorList>
            <person name="Lucas S."/>
            <person name="Copeland A."/>
            <person name="Lapidus A."/>
            <person name="Glavina del Rio T."/>
            <person name="Dalin E."/>
            <person name="Tice H."/>
            <person name="Bruce D."/>
            <person name="Goodwin L."/>
            <person name="Pitluck S."/>
            <person name="Saunders E."/>
            <person name="Brettin T."/>
            <person name="Detter J.C."/>
            <person name="Han C."/>
            <person name="Larimer F."/>
            <person name="Land M."/>
            <person name="Hauser L."/>
            <person name="Kyrpides N."/>
            <person name="Ovchinnikova G."/>
            <person name="Beliaev A.S."/>
            <person name="Richardson P."/>
        </authorList>
    </citation>
    <scope>NUCLEOTIDE SEQUENCE [LARGE SCALE GENOMIC DNA]</scope>
    <source>
        <strain>2CP-1 / ATCC BAA-258</strain>
    </source>
</reference>
<protein>
    <recommendedName>
        <fullName evidence="1">Protein-L-isoaspartate O-methyltransferase</fullName>
        <ecNumber evidence="1">2.1.1.77</ecNumber>
    </recommendedName>
    <alternativeName>
        <fullName evidence="1">L-isoaspartyl protein carboxyl methyltransferase</fullName>
    </alternativeName>
    <alternativeName>
        <fullName evidence="1">Protein L-isoaspartyl methyltransferase</fullName>
    </alternativeName>
    <alternativeName>
        <fullName evidence="1">Protein-beta-aspartate methyltransferase</fullName>
        <shortName evidence="1">PIMT</shortName>
    </alternativeName>
</protein>
<sequence length="209" mass="22341">MSTELAAWLGHMGIRDRRVLDAIAALDRARFVSRDLSAEAYADRPLPIGFGQTISQPYVVAFMTEALELEGGERVLEVGTGSGYQTALLARLAGEVWSVEIVPGLAARARALLLEELGLANVHLREGDGALGWPEAAPFERILVTAAAPRVPPALRAQLAPGGRMVLPVGEAESEQVLRVVERGADGIEESEDVLPVRFVPLTHLPPAV</sequence>
<gene>
    <name evidence="1" type="primary">pcm</name>
    <name type="ordered locus">A2cp1_2211</name>
</gene>
<keyword id="KW-0963">Cytoplasm</keyword>
<keyword id="KW-0489">Methyltransferase</keyword>
<keyword id="KW-0949">S-adenosyl-L-methionine</keyword>
<keyword id="KW-0808">Transferase</keyword>
<feature type="chain" id="PRO_1000192385" description="Protein-L-isoaspartate O-methyltransferase">
    <location>
        <begin position="1"/>
        <end position="209"/>
    </location>
</feature>
<feature type="active site" evidence="1">
    <location>
        <position position="55"/>
    </location>
</feature>